<organism>
    <name type="scientific">Oryctolagus cuniculus</name>
    <name type="common">Rabbit</name>
    <dbReference type="NCBI Taxonomy" id="9986"/>
    <lineage>
        <taxon>Eukaryota</taxon>
        <taxon>Metazoa</taxon>
        <taxon>Chordata</taxon>
        <taxon>Craniata</taxon>
        <taxon>Vertebrata</taxon>
        <taxon>Euteleostomi</taxon>
        <taxon>Mammalia</taxon>
        <taxon>Eutheria</taxon>
        <taxon>Euarchontoglires</taxon>
        <taxon>Glires</taxon>
        <taxon>Lagomorpha</taxon>
        <taxon>Leporidae</taxon>
        <taxon>Oryctolagus</taxon>
    </lineage>
</organism>
<proteinExistence type="evidence at transcript level"/>
<evidence type="ECO:0000250" key="1">
    <source>
        <dbReference type="UniProtKB" id="P00189"/>
    </source>
</evidence>
<evidence type="ECO:0000250" key="2">
    <source>
        <dbReference type="UniProtKB" id="P05108"/>
    </source>
</evidence>
<evidence type="ECO:0000250" key="3">
    <source>
        <dbReference type="UniProtKB" id="P14137"/>
    </source>
</evidence>
<evidence type="ECO:0000303" key="4">
    <source>
    </source>
</evidence>
<evidence type="ECO:0000305" key="5"/>
<sequence>RGLPSRSVFLRGCQASLSTAQERLGHPGVPTREGVRVATRSPRPYHEIPSPGDNGWLNLYHLAEEKGTHRVHYRHVQNFQKYGPIYRENLGNVESVYIMDPEDVALLFNSEGPQPERFLIPPWVAYHEYYRRPVGVLLKKAQGWKRDRVALNQEVMAPDAIKNFVPLLEAVSQAFVRMLHGRVQQGVFSGDISDDLFRFAFESMTNIMFGERLGMLEETVDPEAHEFIDAVYQMFHTSVPMLSLPPSLFRLFRTRTWRDHVAAWDVIFTNADKYTQSFYWDLRQKQDLGGSYRGILYSLLGTSKLSFEDIKANVTEMLAGSVDTTSMTLQWHLYEMGAALGMQEMLRAEVLAARRQAQGDMTAMLQSVPLLKASIKETLRLHPISVTLQRYLVNDLVLQDYMIPAKTLVQVANYGMGREPSFFANPEKFDPPRWLDKDKNATHFR</sequence>
<protein>
    <recommendedName>
        <fullName evidence="4">Cholesterol side-chain cleavage enzyme, mitochondrial</fullName>
        <ecNumber evidence="2">1.14.15.6</ecNumber>
    </recommendedName>
    <alternativeName>
        <fullName>CYPXIA1</fullName>
    </alternativeName>
    <alternativeName>
        <fullName>Cholesterol desmolase</fullName>
    </alternativeName>
    <alternativeName>
        <fullName>Cytochrome P450 11A1</fullName>
    </alternativeName>
    <alternativeName>
        <fullName>Cytochrome P450(scc)</fullName>
    </alternativeName>
</protein>
<comment type="function">
    <text evidence="2">A cytochrome P450 monooxygenase that catalyzes the side-chain hydroxylation and cleavage of cholesterol to pregnenolone, the precursor of most steroid hormones. Catalyzes three sequential oxidation reactions of cholesterol, namely the hydroxylation at C22 followed with the hydroxylation at C20 to yield 20R,22R-hydroxycholesterol that is further cleaved between C20 and C22 to yield the C21-steroid pregnenolone and 4-methylpentanal. Mechanistically, uses molecular oxygen inserting one oxygen atom into a substrate and reducing the second into a water molecule. Two electrons are provided by NADPH via a two-protein mitochondrial transfer system comprising flavoprotein FDXR (adrenodoxin/ferredoxin reductase) and nonheme iron-sulfur protein FDX1 or FDX2 (adrenodoxin/ferredoxin).</text>
</comment>
<comment type="catalytic activity">
    <reaction evidence="2">
        <text>6 reduced [adrenodoxin] + cholesterol + 3 O2 + 6 H(+) = 4-methylpentanal + pregnenolone + 6 oxidized [adrenodoxin] + 4 H2O</text>
        <dbReference type="Rhea" id="RHEA:35739"/>
        <dbReference type="Rhea" id="RHEA-COMP:9998"/>
        <dbReference type="Rhea" id="RHEA-COMP:9999"/>
        <dbReference type="ChEBI" id="CHEBI:15377"/>
        <dbReference type="ChEBI" id="CHEBI:15378"/>
        <dbReference type="ChEBI" id="CHEBI:15379"/>
        <dbReference type="ChEBI" id="CHEBI:16113"/>
        <dbReference type="ChEBI" id="CHEBI:16581"/>
        <dbReference type="ChEBI" id="CHEBI:17998"/>
        <dbReference type="ChEBI" id="CHEBI:33737"/>
        <dbReference type="ChEBI" id="CHEBI:33738"/>
        <dbReference type="EC" id="1.14.15.6"/>
    </reaction>
    <physiologicalReaction direction="left-to-right" evidence="2">
        <dbReference type="Rhea" id="RHEA:35740"/>
    </physiologicalReaction>
</comment>
<comment type="catalytic activity">
    <reaction evidence="2">
        <text>2 reduced [adrenodoxin] + cholesterol + O2 + 2 H(+) = (22R)-hydroxycholesterol + 2 oxidized [adrenodoxin] + H2O</text>
        <dbReference type="Rhea" id="RHEA:34335"/>
        <dbReference type="Rhea" id="RHEA-COMP:9998"/>
        <dbReference type="Rhea" id="RHEA-COMP:9999"/>
        <dbReference type="ChEBI" id="CHEBI:15377"/>
        <dbReference type="ChEBI" id="CHEBI:15378"/>
        <dbReference type="ChEBI" id="CHEBI:15379"/>
        <dbReference type="ChEBI" id="CHEBI:16113"/>
        <dbReference type="ChEBI" id="CHEBI:33737"/>
        <dbReference type="ChEBI" id="CHEBI:33738"/>
        <dbReference type="ChEBI" id="CHEBI:67237"/>
    </reaction>
    <physiologicalReaction direction="left-to-right" evidence="2">
        <dbReference type="Rhea" id="RHEA:34336"/>
    </physiologicalReaction>
</comment>
<comment type="catalytic activity">
    <reaction evidence="2">
        <text>(22R)-hydroxycholesterol + 2 reduced [adrenodoxin] + O2 + 2 H(+) = (20R,22R)-20,22-dihydroxycholesterol + 2 oxidized [adrenodoxin] + H2O</text>
        <dbReference type="Rhea" id="RHEA:34339"/>
        <dbReference type="Rhea" id="RHEA-COMP:9998"/>
        <dbReference type="Rhea" id="RHEA-COMP:9999"/>
        <dbReference type="ChEBI" id="CHEBI:1294"/>
        <dbReference type="ChEBI" id="CHEBI:15377"/>
        <dbReference type="ChEBI" id="CHEBI:15378"/>
        <dbReference type="ChEBI" id="CHEBI:15379"/>
        <dbReference type="ChEBI" id="CHEBI:33737"/>
        <dbReference type="ChEBI" id="CHEBI:33738"/>
        <dbReference type="ChEBI" id="CHEBI:67237"/>
    </reaction>
    <physiologicalReaction direction="left-to-right" evidence="2">
        <dbReference type="Rhea" id="RHEA:34340"/>
    </physiologicalReaction>
</comment>
<comment type="catalytic activity">
    <reaction evidence="2">
        <text>(20R,22R)-20,22-dihydroxycholesterol + 2 reduced [adrenodoxin] + O2 + 2 H(+) = 4-methylpentanal + pregnenolone + 2 oxidized [adrenodoxin] + 2 H2O</text>
        <dbReference type="Rhea" id="RHEA:34343"/>
        <dbReference type="Rhea" id="RHEA-COMP:9998"/>
        <dbReference type="Rhea" id="RHEA-COMP:9999"/>
        <dbReference type="ChEBI" id="CHEBI:1294"/>
        <dbReference type="ChEBI" id="CHEBI:15377"/>
        <dbReference type="ChEBI" id="CHEBI:15378"/>
        <dbReference type="ChEBI" id="CHEBI:15379"/>
        <dbReference type="ChEBI" id="CHEBI:16581"/>
        <dbReference type="ChEBI" id="CHEBI:17998"/>
        <dbReference type="ChEBI" id="CHEBI:33737"/>
        <dbReference type="ChEBI" id="CHEBI:33738"/>
    </reaction>
    <physiologicalReaction direction="left-to-right" evidence="2">
        <dbReference type="Rhea" id="RHEA:34344"/>
    </physiologicalReaction>
</comment>
<comment type="cofactor">
    <cofactor evidence="2">
        <name>heme</name>
        <dbReference type="ChEBI" id="CHEBI:30413"/>
    </cofactor>
</comment>
<comment type="pathway">
    <text evidence="2">Lipid metabolism; C21-steroid hormone metabolism.</text>
</comment>
<comment type="pathway">
    <text evidence="2">Steroid metabolism; cholesterol metabolism.</text>
</comment>
<comment type="subunit">
    <text evidence="2">Interacts with FDX1/adrenodoxin.</text>
</comment>
<comment type="subcellular location">
    <subcellularLocation>
        <location evidence="3">Mitochondrion inner membrane</location>
        <topology evidence="5">Peripheral membrane protein</topology>
    </subcellularLocation>
    <text evidence="3">Localizes to the matrix side of the mitochondrion inner membrane.</text>
</comment>
<comment type="similarity">
    <text evidence="5">Belongs to the cytochrome P450 family.</text>
</comment>
<reference key="1">
    <citation type="journal article" date="1993" name="Endocrinology">
        <title>Inherited congenital adrenal hyperplasia in the rabbit is caused by a deletion in the gene encoding cytochrome P450 cholesterol side-chain cleavage enzyme.</title>
        <authorList>
            <person name="Yang X."/>
            <person name="Iwamoto K."/>
            <person name="Wang M."/>
            <person name="Artwohl J."/>
            <person name="Mason J.I."/>
            <person name="Pang S."/>
        </authorList>
    </citation>
    <scope>NUCLEOTIDE SEQUENCE [MRNA]</scope>
</reference>
<gene>
    <name type="primary">CYP11A1</name>
</gene>
<feature type="transit peptide" description="Mitochondrion" evidence="1">
    <location>
        <begin position="1" status="less than"/>
        <end position="36"/>
    </location>
</feature>
<feature type="chain" id="PRO_0000003589" description="Cholesterol side-chain cleavage enzyme, mitochondrial">
    <location>
        <begin position="37"/>
        <end position="445" status="greater than"/>
    </location>
</feature>
<feature type="non-terminal residue">
    <location>
        <position position="1"/>
    </location>
</feature>
<feature type="non-terminal residue">
    <location>
        <position position="445"/>
    </location>
</feature>
<name>CP11A_RABIT</name>
<keyword id="KW-0153">Cholesterol metabolism</keyword>
<keyword id="KW-0349">Heme</keyword>
<keyword id="KW-0408">Iron</keyword>
<keyword id="KW-0443">Lipid metabolism</keyword>
<keyword id="KW-0472">Membrane</keyword>
<keyword id="KW-0479">Metal-binding</keyword>
<keyword id="KW-0496">Mitochondrion</keyword>
<keyword id="KW-0999">Mitochondrion inner membrane</keyword>
<keyword id="KW-0503">Monooxygenase</keyword>
<keyword id="KW-0560">Oxidoreductase</keyword>
<keyword id="KW-1185">Reference proteome</keyword>
<keyword id="KW-0753">Steroid metabolism</keyword>
<keyword id="KW-0755">Steroidogenesis</keyword>
<keyword id="KW-1207">Sterol metabolism</keyword>
<keyword id="KW-0809">Transit peptide</keyword>
<accession>Q28827</accession>
<dbReference type="EC" id="1.14.15.6" evidence="2"/>
<dbReference type="EMBL" id="S59219">
    <property type="protein sequence ID" value="AAB26372.1"/>
    <property type="molecule type" value="mRNA"/>
</dbReference>
<dbReference type="PIR" id="A49189">
    <property type="entry name" value="A49189"/>
</dbReference>
<dbReference type="SMR" id="Q28827"/>
<dbReference type="FunCoup" id="Q28827">
    <property type="interactions" value="96"/>
</dbReference>
<dbReference type="STRING" id="9986.ENSOCUP00000023976"/>
<dbReference type="PaxDb" id="9986-ENSOCUP00000023976"/>
<dbReference type="eggNOG" id="KOG0159">
    <property type="taxonomic scope" value="Eukaryota"/>
</dbReference>
<dbReference type="InParanoid" id="Q28827"/>
<dbReference type="UniPathway" id="UPA00229"/>
<dbReference type="UniPathway" id="UPA00296"/>
<dbReference type="Proteomes" id="UP000001811">
    <property type="component" value="Unplaced"/>
</dbReference>
<dbReference type="GO" id="GO:0005743">
    <property type="term" value="C:mitochondrial inner membrane"/>
    <property type="evidence" value="ECO:0000250"/>
    <property type="project" value="UniProtKB"/>
</dbReference>
<dbReference type="GO" id="GO:0008386">
    <property type="term" value="F:cholesterol monooxygenase (side-chain-cleaving) activity"/>
    <property type="evidence" value="ECO:0000250"/>
    <property type="project" value="UniProtKB"/>
</dbReference>
<dbReference type="GO" id="GO:0020037">
    <property type="term" value="F:heme binding"/>
    <property type="evidence" value="ECO:0000250"/>
    <property type="project" value="UniProtKB"/>
</dbReference>
<dbReference type="GO" id="GO:0005506">
    <property type="term" value="F:iron ion binding"/>
    <property type="evidence" value="ECO:0007669"/>
    <property type="project" value="InterPro"/>
</dbReference>
<dbReference type="GO" id="GO:0006700">
    <property type="term" value="P:C21-steroid hormone biosynthetic process"/>
    <property type="evidence" value="ECO:0000250"/>
    <property type="project" value="UniProtKB"/>
</dbReference>
<dbReference type="GO" id="GO:0071375">
    <property type="term" value="P:cellular response to peptide hormone stimulus"/>
    <property type="evidence" value="ECO:0007669"/>
    <property type="project" value="TreeGrafter"/>
</dbReference>
<dbReference type="GO" id="GO:0008203">
    <property type="term" value="P:cholesterol metabolic process"/>
    <property type="evidence" value="ECO:0000250"/>
    <property type="project" value="UniProtKB"/>
</dbReference>
<dbReference type="GO" id="GO:0034650">
    <property type="term" value="P:cortisol metabolic process"/>
    <property type="evidence" value="ECO:0007669"/>
    <property type="project" value="TreeGrafter"/>
</dbReference>
<dbReference type="GO" id="GO:0006704">
    <property type="term" value="P:glucocorticoid biosynthetic process"/>
    <property type="evidence" value="ECO:0007669"/>
    <property type="project" value="TreeGrafter"/>
</dbReference>
<dbReference type="Gene3D" id="1.10.630.10">
    <property type="entry name" value="Cytochrome P450"/>
    <property type="match status" value="1"/>
</dbReference>
<dbReference type="InterPro" id="IPR050479">
    <property type="entry name" value="CYP11_CYP27_families"/>
</dbReference>
<dbReference type="InterPro" id="IPR001128">
    <property type="entry name" value="Cyt_P450"/>
</dbReference>
<dbReference type="InterPro" id="IPR002399">
    <property type="entry name" value="Cyt_P450_mitochondrial"/>
</dbReference>
<dbReference type="InterPro" id="IPR036396">
    <property type="entry name" value="Cyt_P450_sf"/>
</dbReference>
<dbReference type="PANTHER" id="PTHR24279:SF3">
    <property type="entry name" value="CHOLESTEROL SIDE-CHAIN CLEAVAGE ENZYME, MITOCHONDRIAL"/>
    <property type="match status" value="1"/>
</dbReference>
<dbReference type="PANTHER" id="PTHR24279">
    <property type="entry name" value="CYTOCHROME P450"/>
    <property type="match status" value="1"/>
</dbReference>
<dbReference type="Pfam" id="PF00067">
    <property type="entry name" value="p450"/>
    <property type="match status" value="1"/>
</dbReference>
<dbReference type="PRINTS" id="PR00408">
    <property type="entry name" value="MITP450"/>
</dbReference>
<dbReference type="PRINTS" id="PR00385">
    <property type="entry name" value="P450"/>
</dbReference>
<dbReference type="SUPFAM" id="SSF48264">
    <property type="entry name" value="Cytochrome P450"/>
    <property type="match status" value="1"/>
</dbReference>